<sequence length="276" mass="30078">MLHRSLACFAVPADRKAFMELVKTLRYRTEAPISDCSAALKETDGDMDAAMQVLRKRGAARAMKKGDRVTEHGFVVSCVGSTPQSGAAIVTICSETDFAARNEHFQRVCMQVRDQLCKLMDATNGAVLANPEEAVKHLSDVMAEELRVAIAVLGENMRVRSIAPLVPAPHVSERLLIGSYTHGSLNVDNVGRIVGLVALSQVRENEVVPKDVLTSVGRHFVATSGAEGNYAHQNFFGSETETVGKWLKQRGLKFSSSLVQEFGKEPVVHTAPEPHR</sequence>
<organism>
    <name type="scientific">Leishmania major</name>
    <dbReference type="NCBI Taxonomy" id="5664"/>
    <lineage>
        <taxon>Eukaryota</taxon>
        <taxon>Discoba</taxon>
        <taxon>Euglenozoa</taxon>
        <taxon>Kinetoplastea</taxon>
        <taxon>Metakinetoplastina</taxon>
        <taxon>Trypanosomatida</taxon>
        <taxon>Trypanosomatidae</taxon>
        <taxon>Leishmaniinae</taxon>
        <taxon>Leishmania</taxon>
    </lineage>
</organism>
<gene>
    <name type="ORF">LmjF.29.0720</name>
</gene>
<reference key="1">
    <citation type="journal article" date="2005" name="Science">
        <title>The genome of the kinetoplastid parasite, Leishmania major.</title>
        <authorList>
            <person name="Ivens A.C."/>
            <person name="Peacock C.S."/>
            <person name="Worthey E.A."/>
            <person name="Murphy L."/>
            <person name="Aggarwal G."/>
            <person name="Berriman M."/>
            <person name="Sisk E."/>
            <person name="Rajandream M.A."/>
            <person name="Adlem E."/>
            <person name="Aert R."/>
            <person name="Anupama A."/>
            <person name="Apostolou Z."/>
            <person name="Attipoe P."/>
            <person name="Bason N."/>
            <person name="Bauser C."/>
            <person name="Beck A."/>
            <person name="Beverley S.M."/>
            <person name="Bianchettin G."/>
            <person name="Borzym K."/>
            <person name="Bothe G."/>
            <person name="Bruschi C.V."/>
            <person name="Collins M."/>
            <person name="Cadag E."/>
            <person name="Ciarloni L."/>
            <person name="Clayton C."/>
            <person name="Coulson R.M.R."/>
            <person name="Cronin A."/>
            <person name="Cruz A.K."/>
            <person name="Davies R.M."/>
            <person name="De Gaudenzi J."/>
            <person name="Dobson D.E."/>
            <person name="Duesterhoeft A."/>
            <person name="Fazelina G."/>
            <person name="Fosker N."/>
            <person name="Frasch A.C."/>
            <person name="Fraser A."/>
            <person name="Fuchs M."/>
            <person name="Gabel C."/>
            <person name="Goble A."/>
            <person name="Goffeau A."/>
            <person name="Harris D."/>
            <person name="Hertz-Fowler C."/>
            <person name="Hilbert H."/>
            <person name="Horn D."/>
            <person name="Huang Y."/>
            <person name="Klages S."/>
            <person name="Knights A."/>
            <person name="Kube M."/>
            <person name="Larke N."/>
            <person name="Litvin L."/>
            <person name="Lord A."/>
            <person name="Louie T."/>
            <person name="Marra M."/>
            <person name="Masuy D."/>
            <person name="Matthews K."/>
            <person name="Michaeli S."/>
            <person name="Mottram J.C."/>
            <person name="Mueller-Auer S."/>
            <person name="Munden H."/>
            <person name="Nelson S."/>
            <person name="Norbertczak H."/>
            <person name="Oliver K."/>
            <person name="O'neil S."/>
            <person name="Pentony M."/>
            <person name="Pohl T.M."/>
            <person name="Price C."/>
            <person name="Purnelle B."/>
            <person name="Quail M.A."/>
            <person name="Rabbinowitsch E."/>
            <person name="Reinhardt R."/>
            <person name="Rieger M."/>
            <person name="Rinta J."/>
            <person name="Robben J."/>
            <person name="Robertson L."/>
            <person name="Ruiz J.C."/>
            <person name="Rutter S."/>
            <person name="Saunders D."/>
            <person name="Schaefer M."/>
            <person name="Schein J."/>
            <person name="Schwartz D.C."/>
            <person name="Seeger K."/>
            <person name="Seyler A."/>
            <person name="Sharp S."/>
            <person name="Shin H."/>
            <person name="Sivam D."/>
            <person name="Squares R."/>
            <person name="Squares S."/>
            <person name="Tosato V."/>
            <person name="Vogt C."/>
            <person name="Volckaert G."/>
            <person name="Wambutt R."/>
            <person name="Warren T."/>
            <person name="Wedler H."/>
            <person name="Woodward J."/>
            <person name="Zhou S."/>
            <person name="Zimmermann W."/>
            <person name="Smith D.F."/>
            <person name="Blackwell J.M."/>
            <person name="Stuart K.D."/>
            <person name="Barrell B.G."/>
            <person name="Myler P.J."/>
        </authorList>
    </citation>
    <scope>NUCLEOTIDE SEQUENCE [LARGE SCALE GENOMIC DNA]</scope>
    <source>
        <strain>MHOM/IL/81/Friedlin</strain>
    </source>
</reference>
<protein>
    <recommendedName>
        <fullName evidence="1">Elongation factor Ts, mitochondrial</fullName>
        <shortName evidence="1">EF-Ts</shortName>
        <shortName evidence="1">EF-TsMt</shortName>
    </recommendedName>
</protein>
<dbReference type="EMBL" id="FR796425">
    <property type="protein sequence ID" value="CBZ12403.1"/>
    <property type="molecule type" value="Genomic_DNA"/>
</dbReference>
<dbReference type="RefSeq" id="XP_003722146.1">
    <property type="nucleotide sequence ID" value="XM_003722098.1"/>
</dbReference>
<dbReference type="SMR" id="Q4FXY8"/>
<dbReference type="STRING" id="5664.Q4FXY8"/>
<dbReference type="EnsemblProtists" id="CBZ12403">
    <property type="protein sequence ID" value="CBZ12403"/>
    <property type="gene ID" value="LMJF_29_0720"/>
</dbReference>
<dbReference type="KEGG" id="lma:LMJF_29_0720"/>
<dbReference type="VEuPathDB" id="TriTrypDB:LmjF.29.0720"/>
<dbReference type="VEuPathDB" id="TriTrypDB:LMJFC_290013100"/>
<dbReference type="VEuPathDB" id="TriTrypDB:LMJLV39_290012600"/>
<dbReference type="VEuPathDB" id="TriTrypDB:LMJSD75_290012600"/>
<dbReference type="eggNOG" id="KOG1071">
    <property type="taxonomic scope" value="Eukaryota"/>
</dbReference>
<dbReference type="InParanoid" id="Q4FXY8"/>
<dbReference type="OMA" id="APHMSER"/>
<dbReference type="Proteomes" id="UP000000542">
    <property type="component" value="Chromosome 29"/>
</dbReference>
<dbReference type="GO" id="GO:0005929">
    <property type="term" value="C:cilium"/>
    <property type="evidence" value="ECO:0000266"/>
    <property type="project" value="GeneDB"/>
</dbReference>
<dbReference type="GO" id="GO:0005737">
    <property type="term" value="C:cytoplasm"/>
    <property type="evidence" value="ECO:0000266"/>
    <property type="project" value="GeneDB"/>
</dbReference>
<dbReference type="GO" id="GO:0005739">
    <property type="term" value="C:mitochondrion"/>
    <property type="evidence" value="ECO:0007669"/>
    <property type="project" value="UniProtKB-SubCell"/>
</dbReference>
<dbReference type="GO" id="GO:0003746">
    <property type="term" value="F:translation elongation factor activity"/>
    <property type="evidence" value="ECO:0000318"/>
    <property type="project" value="GO_Central"/>
</dbReference>
<dbReference type="GO" id="GO:0070125">
    <property type="term" value="P:mitochondrial translational elongation"/>
    <property type="evidence" value="ECO:0000318"/>
    <property type="project" value="GO_Central"/>
</dbReference>
<dbReference type="CDD" id="cd14275">
    <property type="entry name" value="UBA_EF-Ts"/>
    <property type="match status" value="1"/>
</dbReference>
<dbReference type="FunFam" id="1.10.8.10:FF:000001">
    <property type="entry name" value="Elongation factor Ts"/>
    <property type="match status" value="1"/>
</dbReference>
<dbReference type="FunFam" id="3.30.479.20:FF:000033">
    <property type="entry name" value="Elongation factor Ts, mitochondrial"/>
    <property type="match status" value="1"/>
</dbReference>
<dbReference type="Gene3D" id="1.10.8.10">
    <property type="entry name" value="DNA helicase RuvA subunit, C-terminal domain"/>
    <property type="match status" value="1"/>
</dbReference>
<dbReference type="Gene3D" id="3.30.479.20">
    <property type="entry name" value="Elongation factor Ts, dimerisation domain"/>
    <property type="match status" value="1"/>
</dbReference>
<dbReference type="HAMAP" id="MF_00050">
    <property type="entry name" value="EF_Ts"/>
    <property type="match status" value="1"/>
</dbReference>
<dbReference type="InterPro" id="IPR036402">
    <property type="entry name" value="EF-Ts_dimer_sf"/>
</dbReference>
<dbReference type="InterPro" id="IPR001816">
    <property type="entry name" value="Transl_elong_EFTs/EF1B"/>
</dbReference>
<dbReference type="InterPro" id="IPR014039">
    <property type="entry name" value="Transl_elong_EFTs/EF1B_dimer"/>
</dbReference>
<dbReference type="InterPro" id="IPR009060">
    <property type="entry name" value="UBA-like_sf"/>
</dbReference>
<dbReference type="PANTHER" id="PTHR11741">
    <property type="entry name" value="ELONGATION FACTOR TS"/>
    <property type="match status" value="1"/>
</dbReference>
<dbReference type="PANTHER" id="PTHR11741:SF0">
    <property type="entry name" value="ELONGATION FACTOR TS, MITOCHONDRIAL"/>
    <property type="match status" value="1"/>
</dbReference>
<dbReference type="Pfam" id="PF00889">
    <property type="entry name" value="EF_TS"/>
    <property type="match status" value="1"/>
</dbReference>
<dbReference type="SUPFAM" id="SSF54713">
    <property type="entry name" value="Elongation factor Ts (EF-Ts), dimerisation domain"/>
    <property type="match status" value="1"/>
</dbReference>
<dbReference type="SUPFAM" id="SSF46934">
    <property type="entry name" value="UBA-like"/>
    <property type="match status" value="1"/>
</dbReference>
<feature type="chain" id="PRO_0000402338" description="Elongation factor Ts, mitochondrial">
    <location>
        <begin position="1"/>
        <end position="276"/>
    </location>
</feature>
<comment type="function">
    <text evidence="1">Associates with the EF-Tu.GDP complex and induces the exchange of GDP to GTP. It remains bound to the aminoacyl-tRNA.EF-Tu.GTP complex up to the GTP hydrolysis stage on the ribosome.</text>
</comment>
<comment type="subcellular location">
    <subcellularLocation>
        <location evidence="1">Mitochondrion</location>
    </subcellularLocation>
</comment>
<comment type="miscellaneous">
    <text evidence="1">This protein may be expected to contain an N-terminal transit peptide but none has been predicted.</text>
</comment>
<comment type="similarity">
    <text evidence="1">Belongs to the EF-Ts family.</text>
</comment>
<name>EFTS_LEIMA</name>
<evidence type="ECO:0000255" key="1">
    <source>
        <dbReference type="HAMAP-Rule" id="MF_03135"/>
    </source>
</evidence>
<keyword id="KW-0251">Elongation factor</keyword>
<keyword id="KW-0496">Mitochondrion</keyword>
<keyword id="KW-0648">Protein biosynthesis</keyword>
<keyword id="KW-1185">Reference proteome</keyword>
<accession>Q4FXY8</accession>
<accession>E9ADS4</accession>
<proteinExistence type="inferred from homology"/>